<organism>
    <name type="scientific">Escherichia coli O8 (strain IAI1)</name>
    <dbReference type="NCBI Taxonomy" id="585034"/>
    <lineage>
        <taxon>Bacteria</taxon>
        <taxon>Pseudomonadati</taxon>
        <taxon>Pseudomonadota</taxon>
        <taxon>Gammaproteobacteria</taxon>
        <taxon>Enterobacterales</taxon>
        <taxon>Enterobacteriaceae</taxon>
        <taxon>Escherichia</taxon>
    </lineage>
</organism>
<accession>B7M175</accession>
<dbReference type="EC" id="2.1.2.11" evidence="1"/>
<dbReference type="EMBL" id="CU928160">
    <property type="protein sequence ID" value="CAQ97021.1"/>
    <property type="molecule type" value="Genomic_DNA"/>
</dbReference>
<dbReference type="RefSeq" id="WP_000805454.1">
    <property type="nucleotide sequence ID" value="NC_011741.1"/>
</dbReference>
<dbReference type="SMR" id="B7M175"/>
<dbReference type="KEGG" id="ecr:ECIAI1_0132"/>
<dbReference type="HOGENOM" id="CLU_036645_1_0_6"/>
<dbReference type="UniPathway" id="UPA00028">
    <property type="reaction ID" value="UER00003"/>
</dbReference>
<dbReference type="GO" id="GO:0005737">
    <property type="term" value="C:cytoplasm"/>
    <property type="evidence" value="ECO:0007669"/>
    <property type="project" value="UniProtKB-SubCell"/>
</dbReference>
<dbReference type="GO" id="GO:0003864">
    <property type="term" value="F:3-methyl-2-oxobutanoate hydroxymethyltransferase activity"/>
    <property type="evidence" value="ECO:0007669"/>
    <property type="project" value="UniProtKB-UniRule"/>
</dbReference>
<dbReference type="GO" id="GO:0000287">
    <property type="term" value="F:magnesium ion binding"/>
    <property type="evidence" value="ECO:0007669"/>
    <property type="project" value="TreeGrafter"/>
</dbReference>
<dbReference type="GO" id="GO:0015940">
    <property type="term" value="P:pantothenate biosynthetic process"/>
    <property type="evidence" value="ECO:0007669"/>
    <property type="project" value="UniProtKB-UniRule"/>
</dbReference>
<dbReference type="CDD" id="cd06557">
    <property type="entry name" value="KPHMT-like"/>
    <property type="match status" value="1"/>
</dbReference>
<dbReference type="FunFam" id="3.20.20.60:FF:000003">
    <property type="entry name" value="3-methyl-2-oxobutanoate hydroxymethyltransferase"/>
    <property type="match status" value="1"/>
</dbReference>
<dbReference type="Gene3D" id="3.20.20.60">
    <property type="entry name" value="Phosphoenolpyruvate-binding domains"/>
    <property type="match status" value="1"/>
</dbReference>
<dbReference type="HAMAP" id="MF_00156">
    <property type="entry name" value="PanB"/>
    <property type="match status" value="1"/>
</dbReference>
<dbReference type="InterPro" id="IPR003700">
    <property type="entry name" value="Pantoate_hydroxy_MeTrfase"/>
</dbReference>
<dbReference type="InterPro" id="IPR015813">
    <property type="entry name" value="Pyrv/PenolPyrv_kinase-like_dom"/>
</dbReference>
<dbReference type="InterPro" id="IPR040442">
    <property type="entry name" value="Pyrv_kinase-like_dom_sf"/>
</dbReference>
<dbReference type="NCBIfam" id="TIGR00222">
    <property type="entry name" value="panB"/>
    <property type="match status" value="1"/>
</dbReference>
<dbReference type="NCBIfam" id="NF001452">
    <property type="entry name" value="PRK00311.1"/>
    <property type="match status" value="1"/>
</dbReference>
<dbReference type="PANTHER" id="PTHR20881">
    <property type="entry name" value="3-METHYL-2-OXOBUTANOATE HYDROXYMETHYLTRANSFERASE"/>
    <property type="match status" value="1"/>
</dbReference>
<dbReference type="PANTHER" id="PTHR20881:SF0">
    <property type="entry name" value="3-METHYL-2-OXOBUTANOATE HYDROXYMETHYLTRANSFERASE"/>
    <property type="match status" value="1"/>
</dbReference>
<dbReference type="Pfam" id="PF02548">
    <property type="entry name" value="Pantoate_transf"/>
    <property type="match status" value="1"/>
</dbReference>
<dbReference type="PIRSF" id="PIRSF000388">
    <property type="entry name" value="Pantoate_hydroxy_MeTrfase"/>
    <property type="match status" value="1"/>
</dbReference>
<dbReference type="SUPFAM" id="SSF51621">
    <property type="entry name" value="Phosphoenolpyruvate/pyruvate domain"/>
    <property type="match status" value="1"/>
</dbReference>
<gene>
    <name evidence="1" type="primary">panB</name>
    <name type="ordered locus">ECIAI1_0132</name>
</gene>
<proteinExistence type="inferred from homology"/>
<feature type="chain" id="PRO_1000118124" description="3-methyl-2-oxobutanoate hydroxymethyltransferase">
    <location>
        <begin position="1"/>
        <end position="264"/>
    </location>
</feature>
<feature type="active site" description="Proton acceptor" evidence="1">
    <location>
        <position position="181"/>
    </location>
</feature>
<feature type="binding site" evidence="1">
    <location>
        <begin position="45"/>
        <end position="46"/>
    </location>
    <ligand>
        <name>3-methyl-2-oxobutanoate</name>
        <dbReference type="ChEBI" id="CHEBI:11851"/>
    </ligand>
</feature>
<feature type="binding site" evidence="1">
    <location>
        <position position="45"/>
    </location>
    <ligand>
        <name>Mg(2+)</name>
        <dbReference type="ChEBI" id="CHEBI:18420"/>
    </ligand>
</feature>
<feature type="binding site" evidence="1">
    <location>
        <position position="84"/>
    </location>
    <ligand>
        <name>3-methyl-2-oxobutanoate</name>
        <dbReference type="ChEBI" id="CHEBI:11851"/>
    </ligand>
</feature>
<feature type="binding site" evidence="1">
    <location>
        <position position="84"/>
    </location>
    <ligand>
        <name>Mg(2+)</name>
        <dbReference type="ChEBI" id="CHEBI:18420"/>
    </ligand>
</feature>
<feature type="binding site" evidence="1">
    <location>
        <position position="112"/>
    </location>
    <ligand>
        <name>3-methyl-2-oxobutanoate</name>
        <dbReference type="ChEBI" id="CHEBI:11851"/>
    </ligand>
</feature>
<feature type="binding site" evidence="1">
    <location>
        <position position="114"/>
    </location>
    <ligand>
        <name>Mg(2+)</name>
        <dbReference type="ChEBI" id="CHEBI:18420"/>
    </ligand>
</feature>
<reference key="1">
    <citation type="journal article" date="2009" name="PLoS Genet.">
        <title>Organised genome dynamics in the Escherichia coli species results in highly diverse adaptive paths.</title>
        <authorList>
            <person name="Touchon M."/>
            <person name="Hoede C."/>
            <person name="Tenaillon O."/>
            <person name="Barbe V."/>
            <person name="Baeriswyl S."/>
            <person name="Bidet P."/>
            <person name="Bingen E."/>
            <person name="Bonacorsi S."/>
            <person name="Bouchier C."/>
            <person name="Bouvet O."/>
            <person name="Calteau A."/>
            <person name="Chiapello H."/>
            <person name="Clermont O."/>
            <person name="Cruveiller S."/>
            <person name="Danchin A."/>
            <person name="Diard M."/>
            <person name="Dossat C."/>
            <person name="Karoui M.E."/>
            <person name="Frapy E."/>
            <person name="Garry L."/>
            <person name="Ghigo J.M."/>
            <person name="Gilles A.M."/>
            <person name="Johnson J."/>
            <person name="Le Bouguenec C."/>
            <person name="Lescat M."/>
            <person name="Mangenot S."/>
            <person name="Martinez-Jehanne V."/>
            <person name="Matic I."/>
            <person name="Nassif X."/>
            <person name="Oztas S."/>
            <person name="Petit M.A."/>
            <person name="Pichon C."/>
            <person name="Rouy Z."/>
            <person name="Ruf C.S."/>
            <person name="Schneider D."/>
            <person name="Tourret J."/>
            <person name="Vacherie B."/>
            <person name="Vallenet D."/>
            <person name="Medigue C."/>
            <person name="Rocha E.P.C."/>
            <person name="Denamur E."/>
        </authorList>
    </citation>
    <scope>NUCLEOTIDE SEQUENCE [LARGE SCALE GENOMIC DNA]</scope>
    <source>
        <strain>IAI1</strain>
    </source>
</reference>
<comment type="function">
    <text evidence="1">Catalyzes the reversible reaction in which hydroxymethyl group from 5,10-methylenetetrahydrofolate is transferred onto alpha-ketoisovalerate to form ketopantoate.</text>
</comment>
<comment type="catalytic activity">
    <reaction evidence="1">
        <text>3-methyl-2-oxobutanoate + (6R)-5,10-methylene-5,6,7,8-tetrahydrofolate + H2O = 2-dehydropantoate + (6S)-5,6,7,8-tetrahydrofolate</text>
        <dbReference type="Rhea" id="RHEA:11824"/>
        <dbReference type="ChEBI" id="CHEBI:11561"/>
        <dbReference type="ChEBI" id="CHEBI:11851"/>
        <dbReference type="ChEBI" id="CHEBI:15377"/>
        <dbReference type="ChEBI" id="CHEBI:15636"/>
        <dbReference type="ChEBI" id="CHEBI:57453"/>
        <dbReference type="EC" id="2.1.2.11"/>
    </reaction>
</comment>
<comment type="cofactor">
    <cofactor evidence="1">
        <name>Mg(2+)</name>
        <dbReference type="ChEBI" id="CHEBI:18420"/>
    </cofactor>
    <text evidence="1">Binds 1 Mg(2+) ion per subunit.</text>
</comment>
<comment type="pathway">
    <text evidence="1">Cofactor biosynthesis; (R)-pantothenate biosynthesis; (R)-pantoate from 3-methyl-2-oxobutanoate: step 1/2.</text>
</comment>
<comment type="subunit">
    <text evidence="1">Homodecamer; pentamer of dimers.</text>
</comment>
<comment type="subcellular location">
    <subcellularLocation>
        <location evidence="1">Cytoplasm</location>
    </subcellularLocation>
</comment>
<comment type="similarity">
    <text evidence="1">Belongs to the PanB family.</text>
</comment>
<sequence length="264" mass="28165">MKPTTIASLQKCKQDKKRFATITAYDYSFAKLFADEGLNVMLVGDSLGMTVQGHDSTLPVTVEDIAYHTAAVRRGAPNCLLLADLPFMAYATPEQAFENAATVMRAGANMVKIEGGEWLVETVKMLTERAVPVCGHLGLTPQSVNIFGGYKVQGRGDEAGDQLLSDALALEAAGAQLLVLECVPVELAKRITDALAIPVIGIGAGNVTDGQILVMHDAFGITGGHIPKFAKNFLAETGDIRAAVRQYMAEVESGVYPGEEHSFH</sequence>
<protein>
    <recommendedName>
        <fullName evidence="1">3-methyl-2-oxobutanoate hydroxymethyltransferase</fullName>
        <ecNumber evidence="1">2.1.2.11</ecNumber>
    </recommendedName>
    <alternativeName>
        <fullName evidence="1">Ketopantoate hydroxymethyltransferase</fullName>
        <shortName evidence="1">KPHMT</shortName>
    </alternativeName>
</protein>
<name>PANB_ECO8A</name>
<keyword id="KW-0963">Cytoplasm</keyword>
<keyword id="KW-0460">Magnesium</keyword>
<keyword id="KW-0479">Metal-binding</keyword>
<keyword id="KW-0566">Pantothenate biosynthesis</keyword>
<keyword id="KW-0808">Transferase</keyword>
<evidence type="ECO:0000255" key="1">
    <source>
        <dbReference type="HAMAP-Rule" id="MF_00156"/>
    </source>
</evidence>